<evidence type="ECO:0000255" key="1">
    <source>
        <dbReference type="HAMAP-Rule" id="MF_01023"/>
    </source>
</evidence>
<feature type="chain" id="PRO_1000084190" description="Histidinol-phosphate aminotransferase">
    <location>
        <begin position="1"/>
        <end position="358"/>
    </location>
</feature>
<feature type="modified residue" description="N6-(pyridoxal phosphate)lysine" evidence="1">
    <location>
        <position position="218"/>
    </location>
</feature>
<proteinExistence type="inferred from homology"/>
<reference key="1">
    <citation type="submission" date="2007-05" db="EMBL/GenBank/DDBJ databases">
        <title>Complete sequence of Dehalococcoides sp. BAV1.</title>
        <authorList>
            <consortium name="US DOE Joint Genome Institute"/>
            <person name="Copeland A."/>
            <person name="Lucas S."/>
            <person name="Lapidus A."/>
            <person name="Barry K."/>
            <person name="Detter J.C."/>
            <person name="Glavina del Rio T."/>
            <person name="Hammon N."/>
            <person name="Israni S."/>
            <person name="Pitluck S."/>
            <person name="Lowry S."/>
            <person name="Clum A."/>
            <person name="Schmutz J."/>
            <person name="Larimer F."/>
            <person name="Land M."/>
            <person name="Hauser L."/>
            <person name="Kyrpides N."/>
            <person name="Kim E."/>
            <person name="Ritalahti K.M."/>
            <person name="Loeffler F."/>
            <person name="Richardson P."/>
        </authorList>
    </citation>
    <scope>NUCLEOTIDE SEQUENCE [LARGE SCALE GENOMIC DNA]</scope>
    <source>
        <strain>ATCC BAA-2100 / JCM 16839 / KCTC 5957 / BAV1</strain>
    </source>
</reference>
<organism>
    <name type="scientific">Dehalococcoides mccartyi (strain ATCC BAA-2100 / JCM 16839 / KCTC 5957 / BAV1)</name>
    <dbReference type="NCBI Taxonomy" id="216389"/>
    <lineage>
        <taxon>Bacteria</taxon>
        <taxon>Bacillati</taxon>
        <taxon>Chloroflexota</taxon>
        <taxon>Dehalococcoidia</taxon>
        <taxon>Dehalococcoidales</taxon>
        <taxon>Dehalococcoidaceae</taxon>
        <taxon>Dehalococcoides</taxon>
    </lineage>
</organism>
<sequence length="358" mass="40294">MTYNLKKYIRTDLEDFDGYSACKAPELVKTSKQIIKLDANENLYGAAPTVRQAMSEFNQYHIYPDATQSEIRRLLSEYTGVAVEQIVCGAGSDQLIDLLLRLFINPGDEVINCPPTFAMYKFYTELNRGKIVNVPRDASYNINIAAINNAITPQTKLIFIAAPNNPTGTAISKEEIRQILDLGVPTVVDEAYYEFTGQTMVSDMSKYPNLMILRTFSKWAGLAGLRVGYGLFPPIIADYLSRIKDPYSVNIAADAAVRQTMLQREYMLETVKKIVNERQRLYTELSKFGWLKPYPSVANFILCKLLKGKAKEVQHELESKGILVRCFDAPMMENCLRFSVGKPEDTDGLLKALGEMGE</sequence>
<gene>
    <name evidence="1" type="primary">hisC</name>
    <name type="ordered locus">DehaBAV1_0762</name>
</gene>
<comment type="catalytic activity">
    <reaction evidence="1">
        <text>L-histidinol phosphate + 2-oxoglutarate = 3-(imidazol-4-yl)-2-oxopropyl phosphate + L-glutamate</text>
        <dbReference type="Rhea" id="RHEA:23744"/>
        <dbReference type="ChEBI" id="CHEBI:16810"/>
        <dbReference type="ChEBI" id="CHEBI:29985"/>
        <dbReference type="ChEBI" id="CHEBI:57766"/>
        <dbReference type="ChEBI" id="CHEBI:57980"/>
        <dbReference type="EC" id="2.6.1.9"/>
    </reaction>
</comment>
<comment type="cofactor">
    <cofactor evidence="1">
        <name>pyridoxal 5'-phosphate</name>
        <dbReference type="ChEBI" id="CHEBI:597326"/>
    </cofactor>
</comment>
<comment type="pathway">
    <text evidence="1">Amino-acid biosynthesis; L-histidine biosynthesis; L-histidine from 5-phospho-alpha-D-ribose 1-diphosphate: step 7/9.</text>
</comment>
<comment type="subunit">
    <text evidence="1">Homodimer.</text>
</comment>
<comment type="similarity">
    <text evidence="1">Belongs to the class-II pyridoxal-phosphate-dependent aminotransferase family. Histidinol-phosphate aminotransferase subfamily.</text>
</comment>
<keyword id="KW-0028">Amino-acid biosynthesis</keyword>
<keyword id="KW-0032">Aminotransferase</keyword>
<keyword id="KW-0368">Histidine biosynthesis</keyword>
<keyword id="KW-0663">Pyridoxal phosphate</keyword>
<keyword id="KW-0808">Transferase</keyword>
<accession>A5FR29</accession>
<dbReference type="EC" id="2.6.1.9" evidence="1"/>
<dbReference type="EMBL" id="CP000688">
    <property type="protein sequence ID" value="ABQ17345.1"/>
    <property type="molecule type" value="Genomic_DNA"/>
</dbReference>
<dbReference type="SMR" id="A5FR29"/>
<dbReference type="KEGG" id="deb:DehaBAV1_0762"/>
<dbReference type="PATRIC" id="fig|216389.18.peg.811"/>
<dbReference type="HOGENOM" id="CLU_017584_3_1_0"/>
<dbReference type="UniPathway" id="UPA00031">
    <property type="reaction ID" value="UER00012"/>
</dbReference>
<dbReference type="GO" id="GO:0004400">
    <property type="term" value="F:histidinol-phosphate transaminase activity"/>
    <property type="evidence" value="ECO:0007669"/>
    <property type="project" value="UniProtKB-UniRule"/>
</dbReference>
<dbReference type="GO" id="GO:0030170">
    <property type="term" value="F:pyridoxal phosphate binding"/>
    <property type="evidence" value="ECO:0007669"/>
    <property type="project" value="InterPro"/>
</dbReference>
<dbReference type="GO" id="GO:0000105">
    <property type="term" value="P:L-histidine biosynthetic process"/>
    <property type="evidence" value="ECO:0007669"/>
    <property type="project" value="UniProtKB-UniRule"/>
</dbReference>
<dbReference type="CDD" id="cd00609">
    <property type="entry name" value="AAT_like"/>
    <property type="match status" value="1"/>
</dbReference>
<dbReference type="Gene3D" id="3.90.1150.10">
    <property type="entry name" value="Aspartate Aminotransferase, domain 1"/>
    <property type="match status" value="1"/>
</dbReference>
<dbReference type="Gene3D" id="3.40.640.10">
    <property type="entry name" value="Type I PLP-dependent aspartate aminotransferase-like (Major domain)"/>
    <property type="match status" value="1"/>
</dbReference>
<dbReference type="HAMAP" id="MF_01023">
    <property type="entry name" value="HisC_aminotrans_2"/>
    <property type="match status" value="1"/>
</dbReference>
<dbReference type="InterPro" id="IPR004839">
    <property type="entry name" value="Aminotransferase_I/II_large"/>
</dbReference>
<dbReference type="InterPro" id="IPR005861">
    <property type="entry name" value="HisP_aminotrans"/>
</dbReference>
<dbReference type="InterPro" id="IPR015424">
    <property type="entry name" value="PyrdxlP-dep_Trfase"/>
</dbReference>
<dbReference type="InterPro" id="IPR015421">
    <property type="entry name" value="PyrdxlP-dep_Trfase_major"/>
</dbReference>
<dbReference type="InterPro" id="IPR015422">
    <property type="entry name" value="PyrdxlP-dep_Trfase_small"/>
</dbReference>
<dbReference type="NCBIfam" id="TIGR01141">
    <property type="entry name" value="hisC"/>
    <property type="match status" value="1"/>
</dbReference>
<dbReference type="PANTHER" id="PTHR42885:SF2">
    <property type="entry name" value="HISTIDINOL-PHOSPHATE AMINOTRANSFERASE"/>
    <property type="match status" value="1"/>
</dbReference>
<dbReference type="PANTHER" id="PTHR42885">
    <property type="entry name" value="HISTIDINOL-PHOSPHATE AMINOTRANSFERASE-RELATED"/>
    <property type="match status" value="1"/>
</dbReference>
<dbReference type="Pfam" id="PF00155">
    <property type="entry name" value="Aminotran_1_2"/>
    <property type="match status" value="1"/>
</dbReference>
<dbReference type="SUPFAM" id="SSF53383">
    <property type="entry name" value="PLP-dependent transferases"/>
    <property type="match status" value="1"/>
</dbReference>
<protein>
    <recommendedName>
        <fullName evidence="1">Histidinol-phosphate aminotransferase</fullName>
        <ecNumber evidence="1">2.6.1.9</ecNumber>
    </recommendedName>
    <alternativeName>
        <fullName evidence="1">Imidazole acetol-phosphate transaminase</fullName>
    </alternativeName>
</protein>
<name>HIS8_DEHMB</name>